<gene>
    <name evidence="1" type="primary">accD</name>
    <name type="ordered locus">LSL_0459</name>
</gene>
<dbReference type="EC" id="2.1.3.15" evidence="1"/>
<dbReference type="EMBL" id="CP000233">
    <property type="protein sequence ID" value="ABD99269.1"/>
    <property type="molecule type" value="Genomic_DNA"/>
</dbReference>
<dbReference type="RefSeq" id="YP_535352.1">
    <property type="nucleotide sequence ID" value="NC_007929.1"/>
</dbReference>
<dbReference type="SMR" id="Q1WUR6"/>
<dbReference type="STRING" id="362948.LSL_0459"/>
<dbReference type="KEGG" id="lsl:LSL_0459"/>
<dbReference type="PATRIC" id="fig|362948.14.peg.535"/>
<dbReference type="HOGENOM" id="CLU_015486_1_1_9"/>
<dbReference type="OrthoDB" id="9772975at2"/>
<dbReference type="UniPathway" id="UPA00655">
    <property type="reaction ID" value="UER00711"/>
</dbReference>
<dbReference type="Proteomes" id="UP000006559">
    <property type="component" value="Chromosome"/>
</dbReference>
<dbReference type="GO" id="GO:0009317">
    <property type="term" value="C:acetyl-CoA carboxylase complex"/>
    <property type="evidence" value="ECO:0007669"/>
    <property type="project" value="InterPro"/>
</dbReference>
<dbReference type="GO" id="GO:0003989">
    <property type="term" value="F:acetyl-CoA carboxylase activity"/>
    <property type="evidence" value="ECO:0007669"/>
    <property type="project" value="InterPro"/>
</dbReference>
<dbReference type="GO" id="GO:0005524">
    <property type="term" value="F:ATP binding"/>
    <property type="evidence" value="ECO:0007669"/>
    <property type="project" value="UniProtKB-KW"/>
</dbReference>
<dbReference type="GO" id="GO:0016743">
    <property type="term" value="F:carboxyl- or carbamoyltransferase activity"/>
    <property type="evidence" value="ECO:0007669"/>
    <property type="project" value="UniProtKB-UniRule"/>
</dbReference>
<dbReference type="GO" id="GO:0008270">
    <property type="term" value="F:zinc ion binding"/>
    <property type="evidence" value="ECO:0007669"/>
    <property type="project" value="UniProtKB-UniRule"/>
</dbReference>
<dbReference type="GO" id="GO:0006633">
    <property type="term" value="P:fatty acid biosynthetic process"/>
    <property type="evidence" value="ECO:0007669"/>
    <property type="project" value="UniProtKB-KW"/>
</dbReference>
<dbReference type="GO" id="GO:2001295">
    <property type="term" value="P:malonyl-CoA biosynthetic process"/>
    <property type="evidence" value="ECO:0007669"/>
    <property type="project" value="UniProtKB-UniRule"/>
</dbReference>
<dbReference type="Gene3D" id="3.90.226.10">
    <property type="entry name" value="2-enoyl-CoA Hydratase, Chain A, domain 1"/>
    <property type="match status" value="1"/>
</dbReference>
<dbReference type="HAMAP" id="MF_01395">
    <property type="entry name" value="AcetylCoA_CT_beta"/>
    <property type="match status" value="1"/>
</dbReference>
<dbReference type="InterPro" id="IPR034733">
    <property type="entry name" value="AcCoA_carboxyl_beta"/>
</dbReference>
<dbReference type="InterPro" id="IPR000438">
    <property type="entry name" value="Acetyl_CoA_COase_Trfase_b_su"/>
</dbReference>
<dbReference type="InterPro" id="IPR029045">
    <property type="entry name" value="ClpP/crotonase-like_dom_sf"/>
</dbReference>
<dbReference type="InterPro" id="IPR011762">
    <property type="entry name" value="COA_CT_N"/>
</dbReference>
<dbReference type="InterPro" id="IPR041010">
    <property type="entry name" value="Znf-ACC"/>
</dbReference>
<dbReference type="NCBIfam" id="TIGR00515">
    <property type="entry name" value="accD"/>
    <property type="match status" value="1"/>
</dbReference>
<dbReference type="PANTHER" id="PTHR42995">
    <property type="entry name" value="ACETYL-COENZYME A CARBOXYLASE CARBOXYL TRANSFERASE SUBUNIT BETA, CHLOROPLASTIC"/>
    <property type="match status" value="1"/>
</dbReference>
<dbReference type="PANTHER" id="PTHR42995:SF5">
    <property type="entry name" value="ACETYL-COENZYME A CARBOXYLASE CARBOXYL TRANSFERASE SUBUNIT BETA, CHLOROPLASTIC"/>
    <property type="match status" value="1"/>
</dbReference>
<dbReference type="Pfam" id="PF01039">
    <property type="entry name" value="Carboxyl_trans"/>
    <property type="match status" value="1"/>
</dbReference>
<dbReference type="Pfam" id="PF17848">
    <property type="entry name" value="Zn_ribbon_ACC"/>
    <property type="match status" value="1"/>
</dbReference>
<dbReference type="PRINTS" id="PR01070">
    <property type="entry name" value="ACCCTRFRASEB"/>
</dbReference>
<dbReference type="SUPFAM" id="SSF52096">
    <property type="entry name" value="ClpP/crotonase"/>
    <property type="match status" value="1"/>
</dbReference>
<dbReference type="PROSITE" id="PS50980">
    <property type="entry name" value="COA_CT_NTER"/>
    <property type="match status" value="1"/>
</dbReference>
<feature type="chain" id="PRO_0000389774" description="Acetyl-coenzyme A carboxylase carboxyl transferase subunit beta">
    <location>
        <begin position="1"/>
        <end position="283"/>
    </location>
</feature>
<feature type="domain" description="CoA carboxyltransferase N-terminal" evidence="2">
    <location>
        <begin position="29"/>
        <end position="283"/>
    </location>
</feature>
<feature type="zinc finger region" description="C4-type" evidence="1">
    <location>
        <begin position="33"/>
        <end position="54"/>
    </location>
</feature>
<feature type="binding site" evidence="1">
    <location>
        <position position="33"/>
    </location>
    <ligand>
        <name>Zn(2+)</name>
        <dbReference type="ChEBI" id="CHEBI:29105"/>
    </ligand>
</feature>
<feature type="binding site" evidence="1">
    <location>
        <position position="36"/>
    </location>
    <ligand>
        <name>Zn(2+)</name>
        <dbReference type="ChEBI" id="CHEBI:29105"/>
    </ligand>
</feature>
<feature type="binding site" evidence="1">
    <location>
        <position position="51"/>
    </location>
    <ligand>
        <name>Zn(2+)</name>
        <dbReference type="ChEBI" id="CHEBI:29105"/>
    </ligand>
</feature>
<feature type="binding site" evidence="1">
    <location>
        <position position="54"/>
    </location>
    <ligand>
        <name>Zn(2+)</name>
        <dbReference type="ChEBI" id="CHEBI:29105"/>
    </ligand>
</feature>
<sequence length="283" mass="31771">MQLFDELKTISKKHIKANKKAGEKVPSGLWISCPKCQQSIYHKDLGKYKTCPNCYYGFRIHARERLEWLVDTFQEFDTDLETKDPLNFPGYKEKLIKAQQDSKLNDSVLTGIAMIDDVEFALGIMDPYFIMGSMGTVTGEKITRLFERATQKNLPVILFTASGGARMQEGISSLMQMSKISQAVKEHSNAGLLYITVITDPTTGGVTASFAMQGDIILSEPRALLGFAGKRVIEQTIHQKVPDDLQDAETVLKNGFIDNIIKREDQKEKLAWLVKIHSMKGAF</sequence>
<protein>
    <recommendedName>
        <fullName evidence="1">Acetyl-coenzyme A carboxylase carboxyl transferase subunit beta</fullName>
        <shortName evidence="1">ACCase subunit beta</shortName>
        <shortName evidence="1">Acetyl-CoA carboxylase carboxyltransferase subunit beta</shortName>
        <ecNumber evidence="1">2.1.3.15</ecNumber>
    </recommendedName>
</protein>
<keyword id="KW-0067">ATP-binding</keyword>
<keyword id="KW-0963">Cytoplasm</keyword>
<keyword id="KW-0275">Fatty acid biosynthesis</keyword>
<keyword id="KW-0276">Fatty acid metabolism</keyword>
<keyword id="KW-0444">Lipid biosynthesis</keyword>
<keyword id="KW-0443">Lipid metabolism</keyword>
<keyword id="KW-0479">Metal-binding</keyword>
<keyword id="KW-0547">Nucleotide-binding</keyword>
<keyword id="KW-1185">Reference proteome</keyword>
<keyword id="KW-0808">Transferase</keyword>
<keyword id="KW-0862">Zinc</keyword>
<keyword id="KW-0863">Zinc-finger</keyword>
<proteinExistence type="inferred from homology"/>
<comment type="function">
    <text evidence="1">Component of the acetyl coenzyme A carboxylase (ACC) complex. Biotin carboxylase (BC) catalyzes the carboxylation of biotin on its carrier protein (BCCP) and then the CO(2) group is transferred by the transcarboxylase to acetyl-CoA to form malonyl-CoA.</text>
</comment>
<comment type="catalytic activity">
    <reaction evidence="1">
        <text>N(6)-carboxybiotinyl-L-lysyl-[protein] + acetyl-CoA = N(6)-biotinyl-L-lysyl-[protein] + malonyl-CoA</text>
        <dbReference type="Rhea" id="RHEA:54728"/>
        <dbReference type="Rhea" id="RHEA-COMP:10505"/>
        <dbReference type="Rhea" id="RHEA-COMP:10506"/>
        <dbReference type="ChEBI" id="CHEBI:57288"/>
        <dbReference type="ChEBI" id="CHEBI:57384"/>
        <dbReference type="ChEBI" id="CHEBI:83144"/>
        <dbReference type="ChEBI" id="CHEBI:83145"/>
        <dbReference type="EC" id="2.1.3.15"/>
    </reaction>
</comment>
<comment type="cofactor">
    <cofactor evidence="1">
        <name>Zn(2+)</name>
        <dbReference type="ChEBI" id="CHEBI:29105"/>
    </cofactor>
    <text evidence="1">Binds 1 zinc ion per subunit.</text>
</comment>
<comment type="pathway">
    <text evidence="1">Lipid metabolism; malonyl-CoA biosynthesis; malonyl-CoA from acetyl-CoA: step 1/1.</text>
</comment>
<comment type="subunit">
    <text evidence="1">Acetyl-CoA carboxylase is a heterohexamer composed of biotin carboxyl carrier protein (AccB), biotin carboxylase (AccC) and two subunits each of ACCase subunit alpha (AccA) and ACCase subunit beta (AccD).</text>
</comment>
<comment type="subcellular location">
    <subcellularLocation>
        <location evidence="1">Cytoplasm</location>
    </subcellularLocation>
</comment>
<comment type="similarity">
    <text evidence="1">Belongs to the AccD/PCCB family.</text>
</comment>
<evidence type="ECO:0000255" key="1">
    <source>
        <dbReference type="HAMAP-Rule" id="MF_01395"/>
    </source>
</evidence>
<evidence type="ECO:0000255" key="2">
    <source>
        <dbReference type="PROSITE-ProRule" id="PRU01136"/>
    </source>
</evidence>
<reference key="1">
    <citation type="journal article" date="2006" name="Proc. Natl. Acad. Sci. U.S.A.">
        <title>Multireplicon genome architecture of Lactobacillus salivarius.</title>
        <authorList>
            <person name="Claesson M.J."/>
            <person name="Li Y."/>
            <person name="Leahy S."/>
            <person name="Canchaya C."/>
            <person name="van Pijkeren J.P."/>
            <person name="Cerdeno-Tarraga A.M."/>
            <person name="Parkhill J."/>
            <person name="Flynn S."/>
            <person name="O'Sullivan G.C."/>
            <person name="Collins J.K."/>
            <person name="Higgins D."/>
            <person name="Shanahan F."/>
            <person name="Fitzgerald G.F."/>
            <person name="van Sinderen D."/>
            <person name="O'Toole P.W."/>
        </authorList>
    </citation>
    <scope>NUCLEOTIDE SEQUENCE [LARGE SCALE GENOMIC DNA]</scope>
    <source>
        <strain>UCC118</strain>
    </source>
</reference>
<name>ACCD_LIGS1</name>
<organism>
    <name type="scientific">Ligilactobacillus salivarius (strain UCC118)</name>
    <name type="common">Lactobacillus salivarius</name>
    <dbReference type="NCBI Taxonomy" id="362948"/>
    <lineage>
        <taxon>Bacteria</taxon>
        <taxon>Bacillati</taxon>
        <taxon>Bacillota</taxon>
        <taxon>Bacilli</taxon>
        <taxon>Lactobacillales</taxon>
        <taxon>Lactobacillaceae</taxon>
        <taxon>Ligilactobacillus</taxon>
    </lineage>
</organism>
<accession>Q1WUR6</accession>